<comment type="function">
    <text evidence="1">Condensation of UDP-2,3-diacylglucosamine and 2,3-diacylglucosamine-1-phosphate to form lipid A disaccharide, a precursor of lipid A, a phosphorylated glycolipid that anchors the lipopolysaccharide to the outer membrane of the cell.</text>
</comment>
<comment type="catalytic activity">
    <reaction evidence="1">
        <text>2-N,3-O-bis[(3R)-3-hydroxytetradecanoyl]-alpha-D-glucosaminyl 1-phosphate + UDP-2-N,3-O-bis[(3R)-3-hydroxytetradecanoyl]-alpha-D-glucosamine = lipid A disaccharide (E. coli) + UDP + H(+)</text>
        <dbReference type="Rhea" id="RHEA:22668"/>
        <dbReference type="ChEBI" id="CHEBI:15378"/>
        <dbReference type="ChEBI" id="CHEBI:57957"/>
        <dbReference type="ChEBI" id="CHEBI:58223"/>
        <dbReference type="ChEBI" id="CHEBI:58466"/>
        <dbReference type="ChEBI" id="CHEBI:78847"/>
    </reaction>
</comment>
<comment type="catalytic activity">
    <reaction evidence="1">
        <text>a lipid X + a UDP-2-N,3-O-bis[(3R)-3-hydroxyacyl]-alpha-D-glucosamine = a lipid A disaccharide + UDP + H(+)</text>
        <dbReference type="Rhea" id="RHEA:67828"/>
        <dbReference type="ChEBI" id="CHEBI:15378"/>
        <dbReference type="ChEBI" id="CHEBI:58223"/>
        <dbReference type="ChEBI" id="CHEBI:137748"/>
        <dbReference type="ChEBI" id="CHEBI:176338"/>
        <dbReference type="ChEBI" id="CHEBI:176343"/>
        <dbReference type="EC" id="2.4.1.182"/>
    </reaction>
</comment>
<comment type="pathway">
    <text evidence="1">Glycolipid biosynthesis; lipid IV(A) biosynthesis; lipid IV(A) from (3R)-3-hydroxytetradecanoyl-[acyl-carrier-protein] and UDP-N-acetyl-alpha-D-glucosamine: step 5/6.</text>
</comment>
<comment type="similarity">
    <text evidence="1">Belongs to the LpxB family.</text>
</comment>
<gene>
    <name evidence="1" type="primary">lpxB</name>
    <name type="ordered locus">WIGBR3800</name>
</gene>
<name>LPXB_WIGBR</name>
<proteinExistence type="inferred from homology"/>
<protein>
    <recommendedName>
        <fullName evidence="1">Lipid-A-disaccharide synthase</fullName>
        <ecNumber evidence="1">2.4.1.182</ecNumber>
    </recommendedName>
</protein>
<sequence>MKNILIGIVAGEASGDFLGAELIKSLNIIHSNIKFVGIAGPLMLKEKNVESWFSIEELSIMGIFEIINRIPKILNIRNKIFNRLSFLKPDLFIGIDSPEFNIHLEFKLKKNGIKIIHYVSPSIWAWRKSRIFKIKESVDKVLALLPFEKKIYDDFNIPCKFVGHPLADKIPLYPDKYSIRSNLEIDKNSVCLALLPGSRLTEINLLSKKFLYAAKIIKKNIFNLKILVPMVNSLLKKRFEEIKREVAPDLPITIFDNFSYEVMACSDFSIVTSGTATLECMLSKCPMVVGYCMKKINFFLLKKIIKINYISLPNLIAGKKIVPEKIQNECNPEVLAKEILIIFNDKKKYKKTKKIFYKLHKKIRCNSSYNAACSASCLINKLTIK</sequence>
<reference key="1">
    <citation type="journal article" date="2002" name="Nat. Genet.">
        <title>Genome sequence of the endocellular obligate symbiont of tsetse flies, Wigglesworthia glossinidia.</title>
        <authorList>
            <person name="Akman L."/>
            <person name="Yamashita A."/>
            <person name="Watanabe H."/>
            <person name="Oshima K."/>
            <person name="Shiba T."/>
            <person name="Hattori M."/>
            <person name="Aksoy S."/>
        </authorList>
    </citation>
    <scope>NUCLEOTIDE SEQUENCE [LARGE SCALE GENOMIC DNA]</scope>
</reference>
<dbReference type="EC" id="2.4.1.182" evidence="1"/>
<dbReference type="EMBL" id="BA000021">
    <property type="protein sequence ID" value="BAC24526.1"/>
    <property type="molecule type" value="Genomic_DNA"/>
</dbReference>
<dbReference type="SMR" id="Q8D2H4"/>
<dbReference type="STRING" id="36870.gene:10368880"/>
<dbReference type="CAZy" id="GT19">
    <property type="family name" value="Glycosyltransferase Family 19"/>
</dbReference>
<dbReference type="KEGG" id="wbr:lpxB"/>
<dbReference type="eggNOG" id="COG0763">
    <property type="taxonomic scope" value="Bacteria"/>
</dbReference>
<dbReference type="HOGENOM" id="CLU_036577_3_0_6"/>
<dbReference type="OrthoDB" id="9801642at2"/>
<dbReference type="UniPathway" id="UPA00359">
    <property type="reaction ID" value="UER00481"/>
</dbReference>
<dbReference type="Proteomes" id="UP000000562">
    <property type="component" value="Chromosome"/>
</dbReference>
<dbReference type="GO" id="GO:0016020">
    <property type="term" value="C:membrane"/>
    <property type="evidence" value="ECO:0007669"/>
    <property type="project" value="GOC"/>
</dbReference>
<dbReference type="GO" id="GO:0008915">
    <property type="term" value="F:lipid-A-disaccharide synthase activity"/>
    <property type="evidence" value="ECO:0007669"/>
    <property type="project" value="UniProtKB-UniRule"/>
</dbReference>
<dbReference type="GO" id="GO:0005543">
    <property type="term" value="F:phospholipid binding"/>
    <property type="evidence" value="ECO:0007669"/>
    <property type="project" value="TreeGrafter"/>
</dbReference>
<dbReference type="GO" id="GO:0009245">
    <property type="term" value="P:lipid A biosynthetic process"/>
    <property type="evidence" value="ECO:0007669"/>
    <property type="project" value="UniProtKB-UniRule"/>
</dbReference>
<dbReference type="HAMAP" id="MF_00392">
    <property type="entry name" value="LpxB"/>
    <property type="match status" value="1"/>
</dbReference>
<dbReference type="InterPro" id="IPR003835">
    <property type="entry name" value="Glyco_trans_19"/>
</dbReference>
<dbReference type="NCBIfam" id="TIGR00215">
    <property type="entry name" value="lpxB"/>
    <property type="match status" value="1"/>
</dbReference>
<dbReference type="PANTHER" id="PTHR30372">
    <property type="entry name" value="LIPID-A-DISACCHARIDE SYNTHASE"/>
    <property type="match status" value="1"/>
</dbReference>
<dbReference type="PANTHER" id="PTHR30372:SF4">
    <property type="entry name" value="LIPID-A-DISACCHARIDE SYNTHASE, MITOCHONDRIAL-RELATED"/>
    <property type="match status" value="1"/>
</dbReference>
<dbReference type="Pfam" id="PF02684">
    <property type="entry name" value="LpxB"/>
    <property type="match status" value="1"/>
</dbReference>
<dbReference type="SUPFAM" id="SSF53756">
    <property type="entry name" value="UDP-Glycosyltransferase/glycogen phosphorylase"/>
    <property type="match status" value="1"/>
</dbReference>
<accession>Q8D2H4</accession>
<evidence type="ECO:0000255" key="1">
    <source>
        <dbReference type="HAMAP-Rule" id="MF_00392"/>
    </source>
</evidence>
<organism>
    <name type="scientific">Wigglesworthia glossinidia brevipalpis</name>
    <dbReference type="NCBI Taxonomy" id="36870"/>
    <lineage>
        <taxon>Bacteria</taxon>
        <taxon>Pseudomonadati</taxon>
        <taxon>Pseudomonadota</taxon>
        <taxon>Gammaproteobacteria</taxon>
        <taxon>Enterobacterales</taxon>
        <taxon>Erwiniaceae</taxon>
        <taxon>Wigglesworthia</taxon>
    </lineage>
</organism>
<keyword id="KW-0328">Glycosyltransferase</keyword>
<keyword id="KW-0441">Lipid A biosynthesis</keyword>
<keyword id="KW-0444">Lipid biosynthesis</keyword>
<keyword id="KW-0443">Lipid metabolism</keyword>
<keyword id="KW-1185">Reference proteome</keyword>
<keyword id="KW-0808">Transferase</keyword>
<feature type="chain" id="PRO_0000190192" description="Lipid-A-disaccharide synthase">
    <location>
        <begin position="1"/>
        <end position="385"/>
    </location>
</feature>